<accession>A4IRN2</accession>
<protein>
    <recommendedName>
        <fullName evidence="1">Large ribosomal subunit protein bL35</fullName>
    </recommendedName>
    <alternativeName>
        <fullName evidence="3">50S ribosomal protein L35</fullName>
    </alternativeName>
</protein>
<evidence type="ECO:0000255" key="1">
    <source>
        <dbReference type="HAMAP-Rule" id="MF_00514"/>
    </source>
</evidence>
<evidence type="ECO:0000256" key="2">
    <source>
        <dbReference type="SAM" id="MobiDB-lite"/>
    </source>
</evidence>
<evidence type="ECO:0000305" key="3"/>
<organism>
    <name type="scientific">Geobacillus thermodenitrificans (strain NG80-2)</name>
    <dbReference type="NCBI Taxonomy" id="420246"/>
    <lineage>
        <taxon>Bacteria</taxon>
        <taxon>Bacillati</taxon>
        <taxon>Bacillota</taxon>
        <taxon>Bacilli</taxon>
        <taxon>Bacillales</taxon>
        <taxon>Anoxybacillaceae</taxon>
        <taxon>Geobacillus</taxon>
    </lineage>
</organism>
<sequence>MPKMKTHRGSAKRFKKTASGKLKRGHAYTSHLFANKTKKQKRHLRKAALVSPGDFKRIRQMLDNLK</sequence>
<gene>
    <name evidence="1" type="primary">rpmI</name>
    <name type="ordered locus">GTNG_2641</name>
</gene>
<feature type="chain" id="PRO_1000050695" description="Large ribosomal subunit protein bL35">
    <location>
        <begin position="1"/>
        <end position="66"/>
    </location>
</feature>
<feature type="region of interest" description="Disordered" evidence="2">
    <location>
        <begin position="1"/>
        <end position="28"/>
    </location>
</feature>
<feature type="compositionally biased region" description="Basic residues" evidence="2">
    <location>
        <begin position="1"/>
        <end position="26"/>
    </location>
</feature>
<keyword id="KW-0687">Ribonucleoprotein</keyword>
<keyword id="KW-0689">Ribosomal protein</keyword>
<comment type="similarity">
    <text evidence="1">Belongs to the bacterial ribosomal protein bL35 family.</text>
</comment>
<name>RL35_GEOTN</name>
<reference key="1">
    <citation type="journal article" date="2007" name="Proc. Natl. Acad. Sci. U.S.A.">
        <title>Genome and proteome of long-chain alkane degrading Geobacillus thermodenitrificans NG80-2 isolated from a deep-subsurface oil reservoir.</title>
        <authorList>
            <person name="Feng L."/>
            <person name="Wang W."/>
            <person name="Cheng J."/>
            <person name="Ren Y."/>
            <person name="Zhao G."/>
            <person name="Gao C."/>
            <person name="Tang Y."/>
            <person name="Liu X."/>
            <person name="Han W."/>
            <person name="Peng X."/>
            <person name="Liu R."/>
            <person name="Wang L."/>
        </authorList>
    </citation>
    <scope>NUCLEOTIDE SEQUENCE [LARGE SCALE GENOMIC DNA]</scope>
    <source>
        <strain>NG80-2</strain>
    </source>
</reference>
<dbReference type="EMBL" id="CP000557">
    <property type="protein sequence ID" value="ABO67986.1"/>
    <property type="molecule type" value="Genomic_DNA"/>
</dbReference>
<dbReference type="RefSeq" id="WP_011887945.1">
    <property type="nucleotide sequence ID" value="NC_009328.1"/>
</dbReference>
<dbReference type="SMR" id="A4IRN2"/>
<dbReference type="GeneID" id="87623214"/>
<dbReference type="KEGG" id="gtn:GTNG_2641"/>
<dbReference type="eggNOG" id="COG0291">
    <property type="taxonomic scope" value="Bacteria"/>
</dbReference>
<dbReference type="HOGENOM" id="CLU_169643_3_0_9"/>
<dbReference type="Proteomes" id="UP000001578">
    <property type="component" value="Chromosome"/>
</dbReference>
<dbReference type="GO" id="GO:0022625">
    <property type="term" value="C:cytosolic large ribosomal subunit"/>
    <property type="evidence" value="ECO:0007669"/>
    <property type="project" value="TreeGrafter"/>
</dbReference>
<dbReference type="GO" id="GO:0003735">
    <property type="term" value="F:structural constituent of ribosome"/>
    <property type="evidence" value="ECO:0007669"/>
    <property type="project" value="InterPro"/>
</dbReference>
<dbReference type="GO" id="GO:0006412">
    <property type="term" value="P:translation"/>
    <property type="evidence" value="ECO:0007669"/>
    <property type="project" value="UniProtKB-UniRule"/>
</dbReference>
<dbReference type="FunFam" id="4.10.410.60:FF:000001">
    <property type="entry name" value="50S ribosomal protein L35"/>
    <property type="match status" value="1"/>
</dbReference>
<dbReference type="Gene3D" id="4.10.410.60">
    <property type="match status" value="1"/>
</dbReference>
<dbReference type="HAMAP" id="MF_00514">
    <property type="entry name" value="Ribosomal_bL35"/>
    <property type="match status" value="1"/>
</dbReference>
<dbReference type="InterPro" id="IPR001706">
    <property type="entry name" value="Ribosomal_bL35"/>
</dbReference>
<dbReference type="InterPro" id="IPR021137">
    <property type="entry name" value="Ribosomal_bL35-like"/>
</dbReference>
<dbReference type="InterPro" id="IPR018265">
    <property type="entry name" value="Ribosomal_bL35_CS"/>
</dbReference>
<dbReference type="InterPro" id="IPR037229">
    <property type="entry name" value="Ribosomal_bL35_sf"/>
</dbReference>
<dbReference type="NCBIfam" id="TIGR00001">
    <property type="entry name" value="rpmI_bact"/>
    <property type="match status" value="1"/>
</dbReference>
<dbReference type="PANTHER" id="PTHR33343">
    <property type="entry name" value="54S RIBOSOMAL PROTEIN BL35M"/>
    <property type="match status" value="1"/>
</dbReference>
<dbReference type="PANTHER" id="PTHR33343:SF1">
    <property type="entry name" value="LARGE RIBOSOMAL SUBUNIT PROTEIN BL35M"/>
    <property type="match status" value="1"/>
</dbReference>
<dbReference type="Pfam" id="PF01632">
    <property type="entry name" value="Ribosomal_L35p"/>
    <property type="match status" value="1"/>
</dbReference>
<dbReference type="PRINTS" id="PR00064">
    <property type="entry name" value="RIBOSOMALL35"/>
</dbReference>
<dbReference type="SUPFAM" id="SSF143034">
    <property type="entry name" value="L35p-like"/>
    <property type="match status" value="1"/>
</dbReference>
<dbReference type="PROSITE" id="PS00936">
    <property type="entry name" value="RIBOSOMAL_L35"/>
    <property type="match status" value="1"/>
</dbReference>
<proteinExistence type="inferred from homology"/>